<accession>Q83D71</accession>
<gene>
    <name type="primary">alr</name>
    <name type="ordered locus">CBU_0869</name>
</gene>
<name>ALR_COXBU</name>
<protein>
    <recommendedName>
        <fullName evidence="1">Alanine racemase</fullName>
        <ecNumber evidence="1">5.1.1.1</ecNumber>
    </recommendedName>
</protein>
<sequence length="364" mass="39962">MNRATATINVTALKHNLSQIKALAPKSLAWAMIKSNGYGHGLVRVAKALSDANAFGVACIDEALTLREVGIKSPIIVMKGFYNEAELSQFARHRLGAVIHCSDQVSLLEKTNLTSSLSVWLKIDTGMNRLGFSVEQSPAVYNQLKTSSSIQKPIGLMTHLADADNENKTFTELQIKRFFSVTEKMIGPKSIVNSAGFFAYPNALVDWIRPGIILYGISPFGINYNSFKEKIEKKFRPVMTLSAKIIAIKNRRQNDSVGYGCTWSCPEDMPIAIVSIGYGDGYPRHAPSGTPVLLNGKICPLIGRVSMDMIAIDLRSQPNAQVGDDVILWGEGLPVEIIAEKAGTIAYELLCKITQRVQFIEIEK</sequence>
<organism>
    <name type="scientific">Coxiella burnetii (strain RSA 493 / Nine Mile phase I)</name>
    <dbReference type="NCBI Taxonomy" id="227377"/>
    <lineage>
        <taxon>Bacteria</taxon>
        <taxon>Pseudomonadati</taxon>
        <taxon>Pseudomonadota</taxon>
        <taxon>Gammaproteobacteria</taxon>
        <taxon>Legionellales</taxon>
        <taxon>Coxiellaceae</taxon>
        <taxon>Coxiella</taxon>
    </lineage>
</organism>
<reference key="1">
    <citation type="journal article" date="2003" name="Proc. Natl. Acad. Sci. U.S.A.">
        <title>Complete genome sequence of the Q-fever pathogen, Coxiella burnetii.</title>
        <authorList>
            <person name="Seshadri R."/>
            <person name="Paulsen I.T."/>
            <person name="Eisen J.A."/>
            <person name="Read T.D."/>
            <person name="Nelson K.E."/>
            <person name="Nelson W.C."/>
            <person name="Ward N.L."/>
            <person name="Tettelin H."/>
            <person name="Davidsen T.M."/>
            <person name="Beanan M.J."/>
            <person name="DeBoy R.T."/>
            <person name="Daugherty S.C."/>
            <person name="Brinkac L.M."/>
            <person name="Madupu R."/>
            <person name="Dodson R.J."/>
            <person name="Khouri H.M."/>
            <person name="Lee K.H."/>
            <person name="Carty H.A."/>
            <person name="Scanlan D."/>
            <person name="Heinzen R.A."/>
            <person name="Thompson H.A."/>
            <person name="Samuel J.E."/>
            <person name="Fraser C.M."/>
            <person name="Heidelberg J.F."/>
        </authorList>
    </citation>
    <scope>NUCLEOTIDE SEQUENCE [LARGE SCALE GENOMIC DNA]</scope>
    <source>
        <strain>RSA 493 / Nine Mile phase I</strain>
    </source>
</reference>
<proteinExistence type="inferred from homology"/>
<comment type="function">
    <text evidence="1">Catalyzes the interconversion of L-alanine and D-alanine. May also act on other amino acids.</text>
</comment>
<comment type="catalytic activity">
    <reaction evidence="1">
        <text>L-alanine = D-alanine</text>
        <dbReference type="Rhea" id="RHEA:20249"/>
        <dbReference type="ChEBI" id="CHEBI:57416"/>
        <dbReference type="ChEBI" id="CHEBI:57972"/>
        <dbReference type="EC" id="5.1.1.1"/>
    </reaction>
</comment>
<comment type="cofactor">
    <cofactor evidence="1">
        <name>pyridoxal 5'-phosphate</name>
        <dbReference type="ChEBI" id="CHEBI:597326"/>
    </cofactor>
</comment>
<comment type="pathway">
    <text evidence="1">Amino-acid biosynthesis; D-alanine biosynthesis; D-alanine from L-alanine: step 1/1.</text>
</comment>
<comment type="similarity">
    <text evidence="1">Belongs to the alanine racemase family.</text>
</comment>
<dbReference type="EC" id="5.1.1.1" evidence="1"/>
<dbReference type="EMBL" id="AE016828">
    <property type="protein sequence ID" value="AAO90402.1"/>
    <property type="molecule type" value="Genomic_DNA"/>
</dbReference>
<dbReference type="RefSeq" id="NP_819888.1">
    <property type="nucleotide sequence ID" value="NC_002971.4"/>
</dbReference>
<dbReference type="RefSeq" id="WP_005772336.1">
    <property type="nucleotide sequence ID" value="NC_002971.4"/>
</dbReference>
<dbReference type="SMR" id="Q83D71"/>
<dbReference type="STRING" id="227377.CBU_0869"/>
<dbReference type="EnsemblBacteria" id="AAO90402">
    <property type="protein sequence ID" value="AAO90402"/>
    <property type="gene ID" value="CBU_0869"/>
</dbReference>
<dbReference type="GeneID" id="1208762"/>
<dbReference type="KEGG" id="cbu:CBU_0869"/>
<dbReference type="PATRIC" id="fig|227377.7.peg.854"/>
<dbReference type="eggNOG" id="COG0787">
    <property type="taxonomic scope" value="Bacteria"/>
</dbReference>
<dbReference type="HOGENOM" id="CLU_028393_1_0_6"/>
<dbReference type="OrthoDB" id="9813814at2"/>
<dbReference type="UniPathway" id="UPA00042">
    <property type="reaction ID" value="UER00497"/>
</dbReference>
<dbReference type="Proteomes" id="UP000002671">
    <property type="component" value="Chromosome"/>
</dbReference>
<dbReference type="GO" id="GO:0005829">
    <property type="term" value="C:cytosol"/>
    <property type="evidence" value="ECO:0000318"/>
    <property type="project" value="GO_Central"/>
</dbReference>
<dbReference type="GO" id="GO:0008784">
    <property type="term" value="F:alanine racemase activity"/>
    <property type="evidence" value="ECO:0000318"/>
    <property type="project" value="GO_Central"/>
</dbReference>
<dbReference type="GO" id="GO:0030170">
    <property type="term" value="F:pyridoxal phosphate binding"/>
    <property type="evidence" value="ECO:0000318"/>
    <property type="project" value="GO_Central"/>
</dbReference>
<dbReference type="GO" id="GO:0030632">
    <property type="term" value="P:D-alanine biosynthetic process"/>
    <property type="evidence" value="ECO:0000318"/>
    <property type="project" value="GO_Central"/>
</dbReference>
<dbReference type="CDD" id="cd06827">
    <property type="entry name" value="PLPDE_III_AR_proteobact"/>
    <property type="match status" value="1"/>
</dbReference>
<dbReference type="FunFam" id="2.40.37.10:FF:000002">
    <property type="entry name" value="Alanine racemase"/>
    <property type="match status" value="1"/>
</dbReference>
<dbReference type="FunFam" id="3.20.20.10:FF:000044">
    <property type="entry name" value="Alanine racemase"/>
    <property type="match status" value="1"/>
</dbReference>
<dbReference type="Gene3D" id="3.20.20.10">
    <property type="entry name" value="Alanine racemase"/>
    <property type="match status" value="1"/>
</dbReference>
<dbReference type="Gene3D" id="2.40.37.10">
    <property type="entry name" value="Lyase, Ornithine Decarboxylase, Chain A, domain 1"/>
    <property type="match status" value="1"/>
</dbReference>
<dbReference type="HAMAP" id="MF_01201">
    <property type="entry name" value="Ala_racemase"/>
    <property type="match status" value="1"/>
</dbReference>
<dbReference type="InterPro" id="IPR000821">
    <property type="entry name" value="Ala_racemase"/>
</dbReference>
<dbReference type="InterPro" id="IPR009006">
    <property type="entry name" value="Ala_racemase/Decarboxylase_C"/>
</dbReference>
<dbReference type="InterPro" id="IPR011079">
    <property type="entry name" value="Ala_racemase_C"/>
</dbReference>
<dbReference type="InterPro" id="IPR001608">
    <property type="entry name" value="Ala_racemase_N"/>
</dbReference>
<dbReference type="InterPro" id="IPR029066">
    <property type="entry name" value="PLP-binding_barrel"/>
</dbReference>
<dbReference type="NCBIfam" id="TIGR00492">
    <property type="entry name" value="alr"/>
    <property type="match status" value="1"/>
</dbReference>
<dbReference type="PANTHER" id="PTHR30511">
    <property type="entry name" value="ALANINE RACEMASE"/>
    <property type="match status" value="1"/>
</dbReference>
<dbReference type="PANTHER" id="PTHR30511:SF4">
    <property type="entry name" value="ALANINE RACEMASE, BIOSYNTHETIC"/>
    <property type="match status" value="1"/>
</dbReference>
<dbReference type="Pfam" id="PF00842">
    <property type="entry name" value="Ala_racemase_C"/>
    <property type="match status" value="1"/>
</dbReference>
<dbReference type="Pfam" id="PF01168">
    <property type="entry name" value="Ala_racemase_N"/>
    <property type="match status" value="1"/>
</dbReference>
<dbReference type="PRINTS" id="PR00992">
    <property type="entry name" value="ALARACEMASE"/>
</dbReference>
<dbReference type="SMART" id="SM01005">
    <property type="entry name" value="Ala_racemase_C"/>
    <property type="match status" value="1"/>
</dbReference>
<dbReference type="SUPFAM" id="SSF50621">
    <property type="entry name" value="Alanine racemase C-terminal domain-like"/>
    <property type="match status" value="1"/>
</dbReference>
<dbReference type="SUPFAM" id="SSF51419">
    <property type="entry name" value="PLP-binding barrel"/>
    <property type="match status" value="1"/>
</dbReference>
<evidence type="ECO:0000255" key="1">
    <source>
        <dbReference type="HAMAP-Rule" id="MF_01201"/>
    </source>
</evidence>
<keyword id="KW-0413">Isomerase</keyword>
<keyword id="KW-0663">Pyridoxal phosphate</keyword>
<keyword id="KW-1185">Reference proteome</keyword>
<feature type="chain" id="PRO_1000065985" description="Alanine racemase">
    <location>
        <begin position="1"/>
        <end position="364"/>
    </location>
</feature>
<feature type="active site" description="Proton acceptor; specific for D-alanine" evidence="1">
    <location>
        <position position="34"/>
    </location>
</feature>
<feature type="active site" description="Proton acceptor; specific for L-alanine" evidence="1">
    <location>
        <position position="259"/>
    </location>
</feature>
<feature type="binding site" evidence="1">
    <location>
        <position position="129"/>
    </location>
    <ligand>
        <name>substrate</name>
    </ligand>
</feature>
<feature type="binding site" evidence="1">
    <location>
        <position position="307"/>
    </location>
    <ligand>
        <name>substrate</name>
    </ligand>
</feature>
<feature type="modified residue" description="N6-(pyridoxal phosphate)lysine" evidence="1">
    <location>
        <position position="34"/>
    </location>
</feature>